<feature type="chain" id="PRO_1000071956" description="Large ribosomal subunit protein bL33">
    <location>
        <begin position="1"/>
        <end position="55"/>
    </location>
</feature>
<proteinExistence type="inferred from homology"/>
<dbReference type="EMBL" id="CP000020">
    <property type="protein sequence ID" value="AAW84623.1"/>
    <property type="molecule type" value="Genomic_DNA"/>
</dbReference>
<dbReference type="RefSeq" id="WP_005417052.1">
    <property type="nucleotide sequence ID" value="NZ_CAWLES010000001.1"/>
</dbReference>
<dbReference type="RefSeq" id="YP_203511.1">
    <property type="nucleotide sequence ID" value="NC_006840.2"/>
</dbReference>
<dbReference type="SMR" id="Q5E8M3"/>
<dbReference type="STRING" id="312309.VF_0128"/>
<dbReference type="EnsemblBacteria" id="AAW84623">
    <property type="protein sequence ID" value="AAW84623"/>
    <property type="gene ID" value="VF_0128"/>
</dbReference>
<dbReference type="GeneID" id="54162754"/>
<dbReference type="KEGG" id="vfi:VF_0128"/>
<dbReference type="PATRIC" id="fig|312309.11.peg.127"/>
<dbReference type="eggNOG" id="COG0267">
    <property type="taxonomic scope" value="Bacteria"/>
</dbReference>
<dbReference type="HOGENOM" id="CLU_190949_1_1_6"/>
<dbReference type="OrthoDB" id="21586at2"/>
<dbReference type="Proteomes" id="UP000000537">
    <property type="component" value="Chromosome I"/>
</dbReference>
<dbReference type="GO" id="GO:0022625">
    <property type="term" value="C:cytosolic large ribosomal subunit"/>
    <property type="evidence" value="ECO:0007669"/>
    <property type="project" value="TreeGrafter"/>
</dbReference>
<dbReference type="GO" id="GO:0003735">
    <property type="term" value="F:structural constituent of ribosome"/>
    <property type="evidence" value="ECO:0007669"/>
    <property type="project" value="InterPro"/>
</dbReference>
<dbReference type="GO" id="GO:0006412">
    <property type="term" value="P:translation"/>
    <property type="evidence" value="ECO:0007669"/>
    <property type="project" value="UniProtKB-UniRule"/>
</dbReference>
<dbReference type="FunFam" id="2.20.28.120:FF:000001">
    <property type="entry name" value="50S ribosomal protein L33"/>
    <property type="match status" value="1"/>
</dbReference>
<dbReference type="Gene3D" id="2.20.28.120">
    <property type="entry name" value="Ribosomal protein L33"/>
    <property type="match status" value="1"/>
</dbReference>
<dbReference type="HAMAP" id="MF_00294">
    <property type="entry name" value="Ribosomal_bL33"/>
    <property type="match status" value="1"/>
</dbReference>
<dbReference type="InterPro" id="IPR001705">
    <property type="entry name" value="Ribosomal_bL33"/>
</dbReference>
<dbReference type="InterPro" id="IPR018264">
    <property type="entry name" value="Ribosomal_bL33_CS"/>
</dbReference>
<dbReference type="InterPro" id="IPR038584">
    <property type="entry name" value="Ribosomal_bL33_sf"/>
</dbReference>
<dbReference type="InterPro" id="IPR011332">
    <property type="entry name" value="Ribosomal_zn-bd"/>
</dbReference>
<dbReference type="NCBIfam" id="NF001860">
    <property type="entry name" value="PRK00595.1"/>
    <property type="match status" value="1"/>
</dbReference>
<dbReference type="NCBIfam" id="TIGR01023">
    <property type="entry name" value="rpmG_bact"/>
    <property type="match status" value="1"/>
</dbReference>
<dbReference type="PANTHER" id="PTHR15238">
    <property type="entry name" value="54S RIBOSOMAL PROTEIN L39, MITOCHONDRIAL"/>
    <property type="match status" value="1"/>
</dbReference>
<dbReference type="PANTHER" id="PTHR15238:SF1">
    <property type="entry name" value="LARGE RIBOSOMAL SUBUNIT PROTEIN BL33M"/>
    <property type="match status" value="1"/>
</dbReference>
<dbReference type="Pfam" id="PF00471">
    <property type="entry name" value="Ribosomal_L33"/>
    <property type="match status" value="1"/>
</dbReference>
<dbReference type="SUPFAM" id="SSF57829">
    <property type="entry name" value="Zn-binding ribosomal proteins"/>
    <property type="match status" value="1"/>
</dbReference>
<dbReference type="PROSITE" id="PS00582">
    <property type="entry name" value="RIBOSOMAL_L33"/>
    <property type="match status" value="1"/>
</dbReference>
<gene>
    <name evidence="1" type="primary">rpmG</name>
    <name type="ordered locus">VF_0128</name>
</gene>
<sequence>MAKGAREKIKLVSTANTGHFYTTDKNKRNMPGKMEIKKYDPVVRQHVLYKEAKIK</sequence>
<protein>
    <recommendedName>
        <fullName evidence="1">Large ribosomal subunit protein bL33</fullName>
    </recommendedName>
    <alternativeName>
        <fullName evidence="2">50S ribosomal protein L33</fullName>
    </alternativeName>
</protein>
<reference key="1">
    <citation type="journal article" date="2005" name="Proc. Natl. Acad. Sci. U.S.A.">
        <title>Complete genome sequence of Vibrio fischeri: a symbiotic bacterium with pathogenic congeners.</title>
        <authorList>
            <person name="Ruby E.G."/>
            <person name="Urbanowski M."/>
            <person name="Campbell J."/>
            <person name="Dunn A."/>
            <person name="Faini M."/>
            <person name="Gunsalus R."/>
            <person name="Lostroh P."/>
            <person name="Lupp C."/>
            <person name="McCann J."/>
            <person name="Millikan D."/>
            <person name="Schaefer A."/>
            <person name="Stabb E."/>
            <person name="Stevens A."/>
            <person name="Visick K."/>
            <person name="Whistler C."/>
            <person name="Greenberg E.P."/>
        </authorList>
    </citation>
    <scope>NUCLEOTIDE SEQUENCE [LARGE SCALE GENOMIC DNA]</scope>
    <source>
        <strain>ATCC 700601 / ES114</strain>
    </source>
</reference>
<comment type="similarity">
    <text evidence="1">Belongs to the bacterial ribosomal protein bL33 family.</text>
</comment>
<evidence type="ECO:0000255" key="1">
    <source>
        <dbReference type="HAMAP-Rule" id="MF_00294"/>
    </source>
</evidence>
<evidence type="ECO:0000305" key="2"/>
<accession>Q5E8M3</accession>
<organism>
    <name type="scientific">Aliivibrio fischeri (strain ATCC 700601 / ES114)</name>
    <name type="common">Vibrio fischeri</name>
    <dbReference type="NCBI Taxonomy" id="312309"/>
    <lineage>
        <taxon>Bacteria</taxon>
        <taxon>Pseudomonadati</taxon>
        <taxon>Pseudomonadota</taxon>
        <taxon>Gammaproteobacteria</taxon>
        <taxon>Vibrionales</taxon>
        <taxon>Vibrionaceae</taxon>
        <taxon>Aliivibrio</taxon>
    </lineage>
</organism>
<keyword id="KW-1185">Reference proteome</keyword>
<keyword id="KW-0687">Ribonucleoprotein</keyword>
<keyword id="KW-0689">Ribosomal protein</keyword>
<name>RL33_ALIF1</name>